<organism>
    <name type="scientific">Jasminum nudiflorum</name>
    <name type="common">Winter jasmine</name>
    <dbReference type="NCBI Taxonomy" id="126431"/>
    <lineage>
        <taxon>Eukaryota</taxon>
        <taxon>Viridiplantae</taxon>
        <taxon>Streptophyta</taxon>
        <taxon>Embryophyta</taxon>
        <taxon>Tracheophyta</taxon>
        <taxon>Spermatophyta</taxon>
        <taxon>Magnoliopsida</taxon>
        <taxon>eudicotyledons</taxon>
        <taxon>Gunneridae</taxon>
        <taxon>Pentapetalae</taxon>
        <taxon>asterids</taxon>
        <taxon>lamiids</taxon>
        <taxon>Lamiales</taxon>
        <taxon>Oleaceae</taxon>
        <taxon>Jasmineae</taxon>
        <taxon>Jasminum</taxon>
    </lineage>
</organism>
<feature type="chain" id="PRO_0000276099" description="Photosystem II reaction center protein J">
    <location>
        <begin position="1"/>
        <end position="40"/>
    </location>
</feature>
<feature type="transmembrane region" description="Helical" evidence="1">
    <location>
        <begin position="8"/>
        <end position="28"/>
    </location>
</feature>
<geneLocation type="chloroplast"/>
<reference key="1">
    <citation type="journal article" date="2007" name="Mol. Biol. Evol.">
        <title>Gene relocations within chloroplast genomes of Jasminum and Menodora (Oleaceae) are due to multiple, overlapping inversions.</title>
        <authorList>
            <person name="Lee H.-L."/>
            <person name="Jansen R.K."/>
            <person name="Chumley T.W."/>
            <person name="Kim K.-J."/>
        </authorList>
    </citation>
    <scope>NUCLEOTIDE SEQUENCE [LARGE SCALE GENOMIC DNA]</scope>
</reference>
<accession>Q06RB8</accession>
<name>PSBJ_JASNU</name>
<comment type="function">
    <text evidence="1">One of the components of the core complex of photosystem II (PSII). PSII is a light-driven water:plastoquinone oxidoreductase that uses light energy to abstract electrons from H(2)O, generating O(2) and a proton gradient subsequently used for ATP formation. It consists of a core antenna complex that captures photons, and an electron transfer chain that converts photonic excitation into a charge separation.</text>
</comment>
<comment type="subunit">
    <text evidence="1">PSII is composed of 1 copy each of membrane proteins PsbA, PsbB, PsbC, PsbD, PsbE, PsbF, PsbH, PsbI, PsbJ, PsbK, PsbL, PsbM, PsbT, PsbX, PsbY, PsbZ, Psb30/Ycf12, at least 3 peripheral proteins of the oxygen-evolving complex and a large number of cofactors. It forms dimeric complexes.</text>
</comment>
<comment type="subcellular location">
    <subcellularLocation>
        <location evidence="1">Plastid</location>
        <location evidence="1">Chloroplast thylakoid membrane</location>
        <topology evidence="1">Single-pass membrane protein</topology>
    </subcellularLocation>
</comment>
<comment type="similarity">
    <text evidence="1">Belongs to the PsbJ family.</text>
</comment>
<evidence type="ECO:0000255" key="1">
    <source>
        <dbReference type="HAMAP-Rule" id="MF_01305"/>
    </source>
</evidence>
<proteinExistence type="inferred from homology"/>
<keyword id="KW-0150">Chloroplast</keyword>
<keyword id="KW-0472">Membrane</keyword>
<keyword id="KW-0602">Photosynthesis</keyword>
<keyword id="KW-0604">Photosystem II</keyword>
<keyword id="KW-0934">Plastid</keyword>
<keyword id="KW-0674">Reaction center</keyword>
<keyword id="KW-0793">Thylakoid</keyword>
<keyword id="KW-0812">Transmembrane</keyword>
<keyword id="KW-1133">Transmembrane helix</keyword>
<sequence>MADTTGRIPLWIIGTVTGILVIGLVGIFFYGSYSGLGSSL</sequence>
<gene>
    <name evidence="1" type="primary">psbJ</name>
    <name type="ORF">JNC0697</name>
</gene>
<protein>
    <recommendedName>
        <fullName evidence="1">Photosystem II reaction center protein J</fullName>
        <shortName evidence="1">PSII-J</shortName>
    </recommendedName>
</protein>
<dbReference type="EMBL" id="DQ673255">
    <property type="protein sequence ID" value="ABG74641.1"/>
    <property type="molecule type" value="Genomic_DNA"/>
</dbReference>
<dbReference type="RefSeq" id="YP_778503.1">
    <property type="nucleotide sequence ID" value="NC_008407.1"/>
</dbReference>
<dbReference type="SMR" id="Q06RB8"/>
<dbReference type="GeneID" id="4319772"/>
<dbReference type="GO" id="GO:0009535">
    <property type="term" value="C:chloroplast thylakoid membrane"/>
    <property type="evidence" value="ECO:0007669"/>
    <property type="project" value="UniProtKB-SubCell"/>
</dbReference>
<dbReference type="GO" id="GO:0009539">
    <property type="term" value="C:photosystem II reaction center"/>
    <property type="evidence" value="ECO:0007669"/>
    <property type="project" value="InterPro"/>
</dbReference>
<dbReference type="GO" id="GO:0015979">
    <property type="term" value="P:photosynthesis"/>
    <property type="evidence" value="ECO:0007669"/>
    <property type="project" value="UniProtKB-UniRule"/>
</dbReference>
<dbReference type="Gene3D" id="6.10.250.2070">
    <property type="match status" value="1"/>
</dbReference>
<dbReference type="HAMAP" id="MF_01305">
    <property type="entry name" value="PSII_PsbJ"/>
    <property type="match status" value="1"/>
</dbReference>
<dbReference type="InterPro" id="IPR002682">
    <property type="entry name" value="PSII_PsbJ"/>
</dbReference>
<dbReference type="InterPro" id="IPR037267">
    <property type="entry name" value="PSII_PsbJ_sf"/>
</dbReference>
<dbReference type="NCBIfam" id="NF002722">
    <property type="entry name" value="PRK02565.1"/>
    <property type="match status" value="1"/>
</dbReference>
<dbReference type="PANTHER" id="PTHR34812">
    <property type="entry name" value="PHOTOSYSTEM II REACTION CENTER PROTEIN J"/>
    <property type="match status" value="1"/>
</dbReference>
<dbReference type="PANTHER" id="PTHR34812:SF3">
    <property type="entry name" value="PHOTOSYSTEM II REACTION CENTER PROTEIN J"/>
    <property type="match status" value="1"/>
</dbReference>
<dbReference type="Pfam" id="PF01788">
    <property type="entry name" value="PsbJ"/>
    <property type="match status" value="1"/>
</dbReference>
<dbReference type="SUPFAM" id="SSF161021">
    <property type="entry name" value="Photosystem II reaction center protein J, PsbJ"/>
    <property type="match status" value="1"/>
</dbReference>